<dbReference type="EMBL" id="DQ157748">
    <property type="protein sequence ID" value="ABA39881.1"/>
    <property type="molecule type" value="mRNA"/>
</dbReference>
<dbReference type="EMBL" id="AC123711">
    <property type="status" value="NOT_ANNOTATED_CDS"/>
    <property type="molecule type" value="Genomic_DNA"/>
</dbReference>
<dbReference type="EMBL" id="AC136729">
    <property type="status" value="NOT_ANNOTATED_CDS"/>
    <property type="molecule type" value="Genomic_DNA"/>
</dbReference>
<dbReference type="EMBL" id="AC161237">
    <property type="status" value="NOT_ANNOTATED_CDS"/>
    <property type="molecule type" value="Genomic_DNA"/>
</dbReference>
<dbReference type="EMBL" id="BC139134">
    <property type="protein sequence ID" value="AAI39135.1"/>
    <property type="molecule type" value="mRNA"/>
</dbReference>
<dbReference type="CCDS" id="CCDS17892.1"/>
<dbReference type="RefSeq" id="NP_082046.2">
    <property type="nucleotide sequence ID" value="NM_027770.3"/>
</dbReference>
<dbReference type="RefSeq" id="XP_006502160.1">
    <property type="nucleotide sequence ID" value="XM_006502097.4"/>
</dbReference>
<dbReference type="RefSeq" id="XP_006502161.1">
    <property type="nucleotide sequence ID" value="XM_006502098.3"/>
</dbReference>
<dbReference type="RefSeq" id="XP_011238534.1">
    <property type="nucleotide sequence ID" value="XM_011240232.3"/>
</dbReference>
<dbReference type="SMR" id="Q30D77"/>
<dbReference type="ComplexPortal" id="CPX-3001">
    <property type="entry name" value="Collagen type XXIV trimer"/>
</dbReference>
<dbReference type="FunCoup" id="Q30D77">
    <property type="interactions" value="198"/>
</dbReference>
<dbReference type="STRING" id="10090.ENSMUSP00000029848"/>
<dbReference type="GlyCosmos" id="Q30D77">
    <property type="glycosylation" value="4 sites, No reported glycans"/>
</dbReference>
<dbReference type="GlyGen" id="Q30D77">
    <property type="glycosylation" value="7 sites"/>
</dbReference>
<dbReference type="iPTMnet" id="Q30D77"/>
<dbReference type="PhosphoSitePlus" id="Q30D77"/>
<dbReference type="jPOST" id="Q30D77"/>
<dbReference type="PaxDb" id="10090-ENSMUSP00000029848"/>
<dbReference type="ProteomicsDB" id="283605"/>
<dbReference type="DNASU" id="71355"/>
<dbReference type="Ensembl" id="ENSMUST00000029848.5">
    <property type="protein sequence ID" value="ENSMUSP00000029848.5"/>
    <property type="gene ID" value="ENSMUSG00000028197.5"/>
</dbReference>
<dbReference type="GeneID" id="71355"/>
<dbReference type="KEGG" id="mmu:71355"/>
<dbReference type="UCSC" id="uc008rqm.1">
    <property type="organism name" value="mouse"/>
</dbReference>
<dbReference type="AGR" id="MGI:1918605"/>
<dbReference type="CTD" id="255631"/>
<dbReference type="MGI" id="MGI:1918605">
    <property type="gene designation" value="Col24a1"/>
</dbReference>
<dbReference type="VEuPathDB" id="HostDB:ENSMUSG00000028197"/>
<dbReference type="eggNOG" id="KOG3544">
    <property type="taxonomic scope" value="Eukaryota"/>
</dbReference>
<dbReference type="GeneTree" id="ENSGT00940000163583"/>
<dbReference type="HOGENOM" id="CLU_001074_2_1_1"/>
<dbReference type="InParanoid" id="Q30D77"/>
<dbReference type="OMA" id="IQGKRGH"/>
<dbReference type="OrthoDB" id="8939548at2759"/>
<dbReference type="PhylomeDB" id="Q30D77"/>
<dbReference type="TreeFam" id="TF344135"/>
<dbReference type="BioGRID-ORCS" id="71355">
    <property type="hits" value="1 hit in 78 CRISPR screens"/>
</dbReference>
<dbReference type="ChiTaRS" id="Col24a1">
    <property type="organism name" value="mouse"/>
</dbReference>
<dbReference type="PRO" id="PR:Q30D77"/>
<dbReference type="Proteomes" id="UP000000589">
    <property type="component" value="Chromosome 3"/>
</dbReference>
<dbReference type="RNAct" id="Q30D77">
    <property type="molecule type" value="protein"/>
</dbReference>
<dbReference type="Bgee" id="ENSMUSG00000028197">
    <property type="expression patterns" value="Expressed in hindlimb long bone and 129 other cell types or tissues"/>
</dbReference>
<dbReference type="ExpressionAtlas" id="Q30D77">
    <property type="expression patterns" value="baseline and differential"/>
</dbReference>
<dbReference type="GO" id="GO:0005581">
    <property type="term" value="C:collagen trimer"/>
    <property type="evidence" value="ECO:0007669"/>
    <property type="project" value="UniProtKB-KW"/>
</dbReference>
<dbReference type="GO" id="GO:0062023">
    <property type="term" value="C:collagen-containing extracellular matrix"/>
    <property type="evidence" value="ECO:0007005"/>
    <property type="project" value="BHF-UCL"/>
</dbReference>
<dbReference type="GO" id="GO:0005576">
    <property type="term" value="C:extracellular region"/>
    <property type="evidence" value="ECO:0007669"/>
    <property type="project" value="UniProtKB-KW"/>
</dbReference>
<dbReference type="GO" id="GO:0005201">
    <property type="term" value="F:extracellular matrix structural constituent"/>
    <property type="evidence" value="ECO:0007669"/>
    <property type="project" value="InterPro"/>
</dbReference>
<dbReference type="GO" id="GO:0002244">
    <property type="term" value="P:hematopoietic progenitor cell differentiation"/>
    <property type="evidence" value="ECO:0000315"/>
    <property type="project" value="MGI"/>
</dbReference>
<dbReference type="FunFam" id="2.60.120.1000:FF:000008">
    <property type="entry name" value="collagen alpha-1(XXIV) chain isoform X1"/>
    <property type="match status" value="1"/>
</dbReference>
<dbReference type="FunFam" id="2.60.120.1000:FF:000003">
    <property type="entry name" value="Collagen alpha-1(XXVII) chain B"/>
    <property type="match status" value="1"/>
</dbReference>
<dbReference type="FunFam" id="2.60.120.200:FF:000085">
    <property type="entry name" value="collagen alpha-1(XXVII) chain isoform X1"/>
    <property type="match status" value="1"/>
</dbReference>
<dbReference type="Gene3D" id="2.60.120.1000">
    <property type="match status" value="2"/>
</dbReference>
<dbReference type="Gene3D" id="2.60.120.200">
    <property type="match status" value="1"/>
</dbReference>
<dbReference type="InterPro" id="IPR008160">
    <property type="entry name" value="Collagen"/>
</dbReference>
<dbReference type="InterPro" id="IPR050149">
    <property type="entry name" value="Collagen_superfamily"/>
</dbReference>
<dbReference type="InterPro" id="IPR013320">
    <property type="entry name" value="ConA-like_dom_sf"/>
</dbReference>
<dbReference type="InterPro" id="IPR000885">
    <property type="entry name" value="Fib_collagen_C"/>
</dbReference>
<dbReference type="InterPro" id="IPR048287">
    <property type="entry name" value="TSPN-like_N"/>
</dbReference>
<dbReference type="PANTHER" id="PTHR24023">
    <property type="entry name" value="COLLAGEN ALPHA"/>
    <property type="match status" value="1"/>
</dbReference>
<dbReference type="PANTHER" id="PTHR24023:SF1082">
    <property type="entry name" value="COLLAGEN TRIPLE HELIX REPEAT"/>
    <property type="match status" value="1"/>
</dbReference>
<dbReference type="Pfam" id="PF01410">
    <property type="entry name" value="COLFI"/>
    <property type="match status" value="2"/>
</dbReference>
<dbReference type="Pfam" id="PF01391">
    <property type="entry name" value="Collagen"/>
    <property type="match status" value="10"/>
</dbReference>
<dbReference type="SMART" id="SM00038">
    <property type="entry name" value="COLFI"/>
    <property type="match status" value="1"/>
</dbReference>
<dbReference type="SMART" id="SM00210">
    <property type="entry name" value="TSPN"/>
    <property type="match status" value="1"/>
</dbReference>
<dbReference type="SUPFAM" id="SSF49899">
    <property type="entry name" value="Concanavalin A-like lectins/glucanases"/>
    <property type="match status" value="1"/>
</dbReference>
<dbReference type="PROSITE" id="PS51461">
    <property type="entry name" value="NC1_FIB"/>
    <property type="match status" value="1"/>
</dbReference>
<organism>
    <name type="scientific">Mus musculus</name>
    <name type="common">Mouse</name>
    <dbReference type="NCBI Taxonomy" id="10090"/>
    <lineage>
        <taxon>Eukaryota</taxon>
        <taxon>Metazoa</taxon>
        <taxon>Chordata</taxon>
        <taxon>Craniata</taxon>
        <taxon>Vertebrata</taxon>
        <taxon>Euteleostomi</taxon>
        <taxon>Mammalia</taxon>
        <taxon>Eutheria</taxon>
        <taxon>Euarchontoglires</taxon>
        <taxon>Glires</taxon>
        <taxon>Rodentia</taxon>
        <taxon>Myomorpha</taxon>
        <taxon>Muroidea</taxon>
        <taxon>Muridae</taxon>
        <taxon>Murinae</taxon>
        <taxon>Mus</taxon>
        <taxon>Mus</taxon>
    </lineage>
</organism>
<evidence type="ECO:0000255" key="1"/>
<evidence type="ECO:0000255" key="2">
    <source>
        <dbReference type="PROSITE-ProRule" id="PRU00793"/>
    </source>
</evidence>
<evidence type="ECO:0000256" key="3">
    <source>
        <dbReference type="SAM" id="MobiDB-lite"/>
    </source>
</evidence>
<evidence type="ECO:0000269" key="4">
    <source>
    </source>
</evidence>
<evidence type="ECO:0000269" key="5">
    <source>
    </source>
</evidence>
<evidence type="ECO:0000305" key="6"/>
<keyword id="KW-0176">Collagen</keyword>
<keyword id="KW-0272">Extracellular matrix</keyword>
<keyword id="KW-0325">Glycoprotein</keyword>
<keyword id="KW-1185">Reference proteome</keyword>
<keyword id="KW-0677">Repeat</keyword>
<keyword id="KW-0964">Secreted</keyword>
<keyword id="KW-0732">Signal</keyword>
<accession>Q30D77</accession>
<accession>B2RT51</accession>
<accession>E9QNS5</accession>
<comment type="function">
    <text evidence="5">Involved in osteoblast differentiation.</text>
</comment>
<comment type="subcellular location">
    <subcellularLocation>
        <location>Secreted</location>
        <location>Extracellular space</location>
        <location>Extracellular matrix</location>
    </subcellularLocation>
</comment>
<comment type="tissue specificity">
    <text evidence="5">Expressed in skeleton. Found at ossification centers of the craniofacial, axial and appendicular skeleton. Also expressed in retina and to a lower extent in cornea, skin and tendon.</text>
</comment>
<comment type="developmental stage">
    <text evidence="4">Expression is confined to the developing eye and skeleton. First level of expression are detectable around 15 dpc.</text>
</comment>
<comment type="similarity">
    <text evidence="2">Belongs to the fibrillar collagen family.</text>
</comment>
<proteinExistence type="evidence at transcript level"/>
<protein>
    <recommendedName>
        <fullName>Collagen alpha-1(XXIV) chain</fullName>
    </recommendedName>
</protein>
<reference key="1">
    <citation type="journal article" date="2006" name="J. Biol. Chem.">
        <title>CREB-AP1 protein complexes regulate transcription of the collagen XXIV gene (Col24a1) in osteoblasts.</title>
        <authorList>
            <person name="Matsuo N."/>
            <person name="Tanaka S."/>
            <person name="Gordon M.K."/>
            <person name="Koch M."/>
            <person name="Yoshioka H."/>
            <person name="Ramirez F."/>
        </authorList>
    </citation>
    <scope>NUCLEOTIDE SEQUENCE [MRNA]</scope>
    <scope>TISSUE SPECIFICITY</scope>
    <scope>FUNCTION</scope>
    <source>
        <strain>BALB/cJ</strain>
    </source>
</reference>
<reference key="2">
    <citation type="journal article" date="2009" name="PLoS Biol.">
        <title>Lineage-specific biology revealed by a finished genome assembly of the mouse.</title>
        <authorList>
            <person name="Church D.M."/>
            <person name="Goodstadt L."/>
            <person name="Hillier L.W."/>
            <person name="Zody M.C."/>
            <person name="Goldstein S."/>
            <person name="She X."/>
            <person name="Bult C.J."/>
            <person name="Agarwala R."/>
            <person name="Cherry J.L."/>
            <person name="DiCuccio M."/>
            <person name="Hlavina W."/>
            <person name="Kapustin Y."/>
            <person name="Meric P."/>
            <person name="Maglott D."/>
            <person name="Birtle Z."/>
            <person name="Marques A.C."/>
            <person name="Graves T."/>
            <person name="Zhou S."/>
            <person name="Teague B."/>
            <person name="Potamousis K."/>
            <person name="Churas C."/>
            <person name="Place M."/>
            <person name="Herschleb J."/>
            <person name="Runnheim R."/>
            <person name="Forrest D."/>
            <person name="Amos-Landgraf J."/>
            <person name="Schwartz D.C."/>
            <person name="Cheng Z."/>
            <person name="Lindblad-Toh K."/>
            <person name="Eichler E.E."/>
            <person name="Ponting C.P."/>
        </authorList>
    </citation>
    <scope>NUCLEOTIDE SEQUENCE [LARGE SCALE GENOMIC DNA]</scope>
    <source>
        <strain>C57BL/6J</strain>
    </source>
</reference>
<reference key="3">
    <citation type="journal article" date="2004" name="Genome Res.">
        <title>The status, quality, and expansion of the NIH full-length cDNA project: the Mammalian Gene Collection (MGC).</title>
        <authorList>
            <consortium name="The MGC Project Team"/>
        </authorList>
    </citation>
    <scope>NUCLEOTIDE SEQUENCE [LARGE SCALE MRNA]</scope>
    <source>
        <tissue>Brain</tissue>
    </source>
</reference>
<reference key="4">
    <citation type="journal article" date="2003" name="J. Biol. Chem.">
        <title>Collagen XXIV, a vertebrate fibrillar collagen with structural features of invertebrate collagens: selective expression in developing cornea and bone.</title>
        <authorList>
            <person name="Koch M."/>
            <person name="Laub F."/>
            <person name="Zhou P."/>
            <person name="Hahn R.A."/>
            <person name="Tanaka S."/>
            <person name="Burgeson R.E."/>
            <person name="Gerecke D.R."/>
            <person name="Ramirez F."/>
            <person name="Gordon M.K."/>
        </authorList>
    </citation>
    <scope>DEVELOPMENTAL STAGE</scope>
    <source>
        <tissue>Cartilage</tissue>
    </source>
</reference>
<gene>
    <name type="primary">Col24a1</name>
</gene>
<feature type="signal peptide" evidence="1">
    <location>
        <begin position="1"/>
        <end position="35"/>
    </location>
</feature>
<feature type="chain" id="PRO_0000317617" description="Collagen alpha-1(XXIV) chain">
    <location>
        <begin position="36"/>
        <end position="1733"/>
    </location>
</feature>
<feature type="domain" description="Laminin G-like">
    <location>
        <begin position="102"/>
        <end position="229"/>
    </location>
</feature>
<feature type="domain" description="Collagen-like 1">
    <location>
        <begin position="506"/>
        <end position="561"/>
    </location>
</feature>
<feature type="domain" description="Collagen-like 2">
    <location>
        <begin position="577"/>
        <end position="636"/>
    </location>
</feature>
<feature type="domain" description="Collagen-like 3">
    <location>
        <begin position="679"/>
        <end position="738"/>
    </location>
</feature>
<feature type="domain" description="Collagen-like 4">
    <location>
        <begin position="742"/>
        <end position="801"/>
    </location>
</feature>
<feature type="domain" description="Collagen-like 5">
    <location>
        <begin position="802"/>
        <end position="861"/>
    </location>
</feature>
<feature type="domain" description="Collagen-like 6">
    <location>
        <begin position="886"/>
        <end position="945"/>
    </location>
</feature>
<feature type="domain" description="Collagen-like 7">
    <location>
        <begin position="946"/>
        <end position="1005"/>
    </location>
</feature>
<feature type="domain" description="Collagen-like 8">
    <location>
        <begin position="1006"/>
        <end position="1065"/>
    </location>
</feature>
<feature type="domain" description="Collagen-like 9">
    <location>
        <begin position="1072"/>
        <end position="1131"/>
    </location>
</feature>
<feature type="domain" description="Collagen-like 10">
    <location>
        <begin position="1135"/>
        <end position="1189"/>
    </location>
</feature>
<feature type="domain" description="Collagen-like 11">
    <location>
        <begin position="1191"/>
        <end position="1215"/>
    </location>
</feature>
<feature type="domain" description="Collagen-like 12">
    <location>
        <begin position="1220"/>
        <end position="1279"/>
    </location>
</feature>
<feature type="domain" description="Collagen-like 13">
    <location>
        <begin position="1316"/>
        <end position="1375"/>
    </location>
</feature>
<feature type="domain" description="Collagen-like 14">
    <location>
        <begin position="1376"/>
        <end position="1435"/>
    </location>
</feature>
<feature type="domain" description="Collagen-like 15">
    <location>
        <begin position="1439"/>
        <end position="1498"/>
    </location>
</feature>
<feature type="domain" description="Fibrillar collagen NC1" evidence="2">
    <location>
        <begin position="1534"/>
        <end position="1733"/>
    </location>
</feature>
<feature type="region of interest" description="Disordered" evidence="3">
    <location>
        <begin position="257"/>
        <end position="335"/>
    </location>
</feature>
<feature type="region of interest" description="Disordered" evidence="3">
    <location>
        <begin position="505"/>
        <end position="1499"/>
    </location>
</feature>
<feature type="compositionally biased region" description="Polar residues" evidence="3">
    <location>
        <begin position="312"/>
        <end position="324"/>
    </location>
</feature>
<feature type="compositionally biased region" description="Pro residues" evidence="3">
    <location>
        <begin position="512"/>
        <end position="524"/>
    </location>
</feature>
<feature type="compositionally biased region" description="Low complexity" evidence="3">
    <location>
        <begin position="573"/>
        <end position="599"/>
    </location>
</feature>
<feature type="compositionally biased region" description="Low complexity" evidence="3">
    <location>
        <begin position="699"/>
        <end position="708"/>
    </location>
</feature>
<feature type="compositionally biased region" description="Pro residues" evidence="3">
    <location>
        <begin position="776"/>
        <end position="789"/>
    </location>
</feature>
<feature type="compositionally biased region" description="Pro residues" evidence="3">
    <location>
        <begin position="912"/>
        <end position="921"/>
    </location>
</feature>
<feature type="compositionally biased region" description="Low complexity" evidence="3">
    <location>
        <begin position="923"/>
        <end position="944"/>
    </location>
</feature>
<feature type="compositionally biased region" description="Gly residues" evidence="3">
    <location>
        <begin position="1045"/>
        <end position="1054"/>
    </location>
</feature>
<feature type="compositionally biased region" description="Low complexity" evidence="3">
    <location>
        <begin position="1056"/>
        <end position="1074"/>
    </location>
</feature>
<feature type="compositionally biased region" description="Gly residues" evidence="3">
    <location>
        <begin position="1084"/>
        <end position="1093"/>
    </location>
</feature>
<feature type="compositionally biased region" description="Low complexity" evidence="3">
    <location>
        <begin position="1175"/>
        <end position="1205"/>
    </location>
</feature>
<feature type="compositionally biased region" description="Basic and acidic residues" evidence="3">
    <location>
        <begin position="1237"/>
        <end position="1246"/>
    </location>
</feature>
<feature type="compositionally biased region" description="Low complexity" evidence="3">
    <location>
        <begin position="1323"/>
        <end position="1339"/>
    </location>
</feature>
<feature type="compositionally biased region" description="Gly residues" evidence="3">
    <location>
        <begin position="1352"/>
        <end position="1361"/>
    </location>
</feature>
<feature type="compositionally biased region" description="Low complexity" evidence="3">
    <location>
        <begin position="1371"/>
        <end position="1386"/>
    </location>
</feature>
<feature type="compositionally biased region" description="Low complexity" evidence="3">
    <location>
        <begin position="1434"/>
        <end position="1444"/>
    </location>
</feature>
<feature type="compositionally biased region" description="Pro residues" evidence="3">
    <location>
        <begin position="1485"/>
        <end position="1495"/>
    </location>
</feature>
<feature type="glycosylation site" description="N-linked (GlcNAc...) asparagine" evidence="1">
    <location>
        <position position="157"/>
    </location>
</feature>
<feature type="glycosylation site" description="N-linked (GlcNAc...) asparagine" evidence="1">
    <location>
        <position position="366"/>
    </location>
</feature>
<feature type="glycosylation site" description="N-linked (GlcNAc...) asparagine" evidence="1">
    <location>
        <position position="396"/>
    </location>
</feature>
<feature type="glycosylation site" description="N-linked (GlcNAc...) asparagine" evidence="1">
    <location>
        <position position="448"/>
    </location>
</feature>
<feature type="sequence conflict" description="In Ref. 1; ABA39881 and 3; AAI39135." evidence="6" ref="1 3">
    <original>T</original>
    <variation>M</variation>
    <location>
        <position position="1146"/>
    </location>
</feature>
<sequence length="1733" mass="175733">MHLGAYRTRHGKVSPTTETKLFLRFIVLCVVWISVHAQGQGIDILQQLGLGGRDVRYTSSVTAVPSSSWSTPLPQGVHLTDFGVILTDNAYIESPLVNILPISLRQPLTVLIGLQSFKVNNAFLFSIRNNNRLQFGVQLLPKKLIVHVGGKQTVTFNYSAHDERWHSFAITVDHHVISMFVECGKRHFSGETTSDVQTFDPHSVFTLGSINNSSAHFEGTVCQLEIMPSTAASAEYCRHLKQQCLRADASQAQRNLPHTAGMPTRHPAHTPLPRGFPGTDSPQKRFTEQDSLPKGFDGTELPRETFADGKSIPNNRSNGSATVHESQEHQTPRAQLTSFHSGNISAVTLPNYRIQAKEITTKEETNLTLSVAHHLPSEARMNEEGRINPLFAGFDNITQHEEAAGLPLPKKASSGFAHTNQDTMKNLEKALTANLYTNELIEMERILNSTLYRVMYGPSVDNHLELRKEGEFYPDATNPIEGSYEPQAYDYYSYEDYNAVLDMEYLRGPKGDPGPPGPPGPMGIPGPSGKRGPRGIPGPHGNPGLPGLPGPKGPKGDPGLSPGQAASGEKGDPGLLGLVGPPGLQGAKGLKGHPGLPGLRGEHGLPGLAGNIGSPGYPGRQGLAGPEGNPGSKGVRGFIGSPGEVGQLGPEGERGTPGVRGKKGPKGRQGFPGDFGDRGPAGLDGSPGLVGGTGPPGFPGVTGSVGPAGPTGPPGAPGPMGLSGSRGPSGIKGDKGEQGVAGEPGEPGYPGDKGNIGSPGPPGIRGKSGPSGQPGDPGPQGPSGPPGPEGFPGDIGIPGQNGPEGPKGHLGNRGPPGPPGLKGTQGEEGPIGPFGELGSRGKPGRKGYMGEPGPEGLKGEVGDQGDIGKTGETGPVGLPGEVGITGSIGEKGERGSPGPLGPQGEKGVMGYPGPPGAPGPMGPLGLPGLVGARGAPGSPGPKGQRGPRGPDGLAGDQGGHGAKGEKGNQGKRGLPGLPGKAGSPGERGVQGKPGFQGLPGSSGDVGPAGEPGPRGLPGIAGLPGEMGVEGPPGTEGDSGLQGEPGAKGDGGPAGSAGATGEPGPRGEPGAPGEEGLQGKDGLKGAPGGSGLPGEDGDKGEMGLPGTAGPVGRPGQMGLPGPEGIVGTPGQRGRLGKKGDKGQVGPTGEAGSRGPPGSVGENGPKGARGTRGAVGPLGLMGPEGEPGIPGYRGHQGQPGPSGLPGPKGEKGYPGEDSTVLGPPGPPGEPGPMGEQGETGEHGEEGYKGHMGVPGLRGATGQQGPPGEPGDQGGQGPKGERGSEGPQGKRGVPGPSGKPGIPGVPGFPGPKGLQGYPGVDGMSGYPGKPGLPGKQGLLGVPGSPGRTGVAGSPGPQGGKGASGPPGSPGAPGPKGEQGLPGQPGVPGQRGHRGTPGDQGLRGAPGLKGQPGEHGDQGLAGFQGFPGPRGPEGDAGIVGIVGPKGPIGQRGNTGPLGREGIIGPTGGTGPRGEKGFRGETGPQGPRGQPGPPGPPGAPGPRRQMDINAAIRALIESNSAQQMESYQNTEGTLISHSSDIFKTLTYLSSLLSSIKNPLGTRENPARICKDLLSCQYKVSDGKYWIDPNLGCSSDAFEVFCNFSAGGQTCLSPVSVTKLEFGVSKVQMNFLHLLSSEATHTITIHCLNTPRWSSTWADGPELPISFKGWNGQIFEENTLLEPQVLSDDCKIQDGSWHKAKFLFHTQNPNQLPVTEVQNLPHLGTEQKRYIESNSVCFL</sequence>
<name>COOA1_MOUSE</name>